<comment type="function">
    <text evidence="1">Nucleotide-binding protein.</text>
</comment>
<comment type="similarity">
    <text evidence="1">Belongs to the YajQ family.</text>
</comment>
<name>Y3671_XANAC</name>
<accession>Q8PGE6</accession>
<keyword id="KW-0547">Nucleotide-binding</keyword>
<gene>
    <name type="ordered locus">XAC3671</name>
</gene>
<reference key="1">
    <citation type="journal article" date="2002" name="Nature">
        <title>Comparison of the genomes of two Xanthomonas pathogens with differing host specificities.</title>
        <authorList>
            <person name="da Silva A.C.R."/>
            <person name="Ferro J.A."/>
            <person name="Reinach F.C."/>
            <person name="Farah C.S."/>
            <person name="Furlan L.R."/>
            <person name="Quaggio R.B."/>
            <person name="Monteiro-Vitorello C.B."/>
            <person name="Van Sluys M.A."/>
            <person name="Almeida N.F. Jr."/>
            <person name="Alves L.M.C."/>
            <person name="do Amaral A.M."/>
            <person name="Bertolini M.C."/>
            <person name="Camargo L.E.A."/>
            <person name="Camarotte G."/>
            <person name="Cannavan F."/>
            <person name="Cardozo J."/>
            <person name="Chambergo F."/>
            <person name="Ciapina L.P."/>
            <person name="Cicarelli R.M.B."/>
            <person name="Coutinho L.L."/>
            <person name="Cursino-Santos J.R."/>
            <person name="El-Dorry H."/>
            <person name="Faria J.B."/>
            <person name="Ferreira A.J.S."/>
            <person name="Ferreira R.C.C."/>
            <person name="Ferro M.I.T."/>
            <person name="Formighieri E.F."/>
            <person name="Franco M.C."/>
            <person name="Greggio C.C."/>
            <person name="Gruber A."/>
            <person name="Katsuyama A.M."/>
            <person name="Kishi L.T."/>
            <person name="Leite R.P."/>
            <person name="Lemos E.G.M."/>
            <person name="Lemos M.V.F."/>
            <person name="Locali E.C."/>
            <person name="Machado M.A."/>
            <person name="Madeira A.M.B.N."/>
            <person name="Martinez-Rossi N.M."/>
            <person name="Martins E.C."/>
            <person name="Meidanis J."/>
            <person name="Menck C.F.M."/>
            <person name="Miyaki C.Y."/>
            <person name="Moon D.H."/>
            <person name="Moreira L.M."/>
            <person name="Novo M.T.M."/>
            <person name="Okura V.K."/>
            <person name="Oliveira M.C."/>
            <person name="Oliveira V.R."/>
            <person name="Pereira H.A."/>
            <person name="Rossi A."/>
            <person name="Sena J.A.D."/>
            <person name="Silva C."/>
            <person name="de Souza R.F."/>
            <person name="Spinola L.A.F."/>
            <person name="Takita M.A."/>
            <person name="Tamura R.E."/>
            <person name="Teixeira E.C."/>
            <person name="Tezza R.I.D."/>
            <person name="Trindade dos Santos M."/>
            <person name="Truffi D."/>
            <person name="Tsai S.M."/>
            <person name="White F.F."/>
            <person name="Setubal J.C."/>
            <person name="Kitajima J.P."/>
        </authorList>
    </citation>
    <scope>NUCLEOTIDE SEQUENCE [LARGE SCALE GENOMIC DNA]</scope>
    <source>
        <strain>306</strain>
    </source>
</reference>
<protein>
    <recommendedName>
        <fullName evidence="1">Nucleotide-binding protein XAC3671</fullName>
    </recommendedName>
</protein>
<dbReference type="EMBL" id="AE008923">
    <property type="protein sequence ID" value="AAM38514.1"/>
    <property type="molecule type" value="Genomic_DNA"/>
</dbReference>
<dbReference type="RefSeq" id="WP_003489178.1">
    <property type="nucleotide sequence ID" value="NC_003919.1"/>
</dbReference>
<dbReference type="SMR" id="Q8PGE6"/>
<dbReference type="KEGG" id="xac:XAC3671"/>
<dbReference type="eggNOG" id="COG1666">
    <property type="taxonomic scope" value="Bacteria"/>
</dbReference>
<dbReference type="HOGENOM" id="CLU_099839_1_0_6"/>
<dbReference type="Proteomes" id="UP000000576">
    <property type="component" value="Chromosome"/>
</dbReference>
<dbReference type="GO" id="GO:0005829">
    <property type="term" value="C:cytosol"/>
    <property type="evidence" value="ECO:0007669"/>
    <property type="project" value="TreeGrafter"/>
</dbReference>
<dbReference type="GO" id="GO:0000166">
    <property type="term" value="F:nucleotide binding"/>
    <property type="evidence" value="ECO:0007669"/>
    <property type="project" value="TreeGrafter"/>
</dbReference>
<dbReference type="CDD" id="cd11740">
    <property type="entry name" value="YajQ_like"/>
    <property type="match status" value="1"/>
</dbReference>
<dbReference type="FunFam" id="3.30.70.990:FF:000001">
    <property type="entry name" value="UPF0234 protein YajQ"/>
    <property type="match status" value="1"/>
</dbReference>
<dbReference type="Gene3D" id="3.30.70.860">
    <property type="match status" value="1"/>
</dbReference>
<dbReference type="Gene3D" id="3.30.70.990">
    <property type="entry name" value="YajQ-like, domain 2"/>
    <property type="match status" value="1"/>
</dbReference>
<dbReference type="HAMAP" id="MF_00632">
    <property type="entry name" value="YajQ"/>
    <property type="match status" value="1"/>
</dbReference>
<dbReference type="InterPro" id="IPR007551">
    <property type="entry name" value="DUF520"/>
</dbReference>
<dbReference type="InterPro" id="IPR035571">
    <property type="entry name" value="UPF0234-like_C"/>
</dbReference>
<dbReference type="InterPro" id="IPR035570">
    <property type="entry name" value="UPF0234_N"/>
</dbReference>
<dbReference type="InterPro" id="IPR036183">
    <property type="entry name" value="YajQ-like_sf"/>
</dbReference>
<dbReference type="NCBIfam" id="NF003819">
    <property type="entry name" value="PRK05412.1"/>
    <property type="match status" value="1"/>
</dbReference>
<dbReference type="PANTHER" id="PTHR30476">
    <property type="entry name" value="UPF0234 PROTEIN YAJQ"/>
    <property type="match status" value="1"/>
</dbReference>
<dbReference type="PANTHER" id="PTHR30476:SF0">
    <property type="entry name" value="UPF0234 PROTEIN YAJQ"/>
    <property type="match status" value="1"/>
</dbReference>
<dbReference type="Pfam" id="PF04461">
    <property type="entry name" value="DUF520"/>
    <property type="match status" value="1"/>
</dbReference>
<dbReference type="SUPFAM" id="SSF89963">
    <property type="entry name" value="YajQ-like"/>
    <property type="match status" value="2"/>
</dbReference>
<evidence type="ECO:0000255" key="1">
    <source>
        <dbReference type="HAMAP-Rule" id="MF_00632"/>
    </source>
</evidence>
<feature type="chain" id="PRO_0000106208" description="Nucleotide-binding protein XAC3671">
    <location>
        <begin position="1"/>
        <end position="161"/>
    </location>
</feature>
<organism>
    <name type="scientific">Xanthomonas axonopodis pv. citri (strain 306)</name>
    <dbReference type="NCBI Taxonomy" id="190486"/>
    <lineage>
        <taxon>Bacteria</taxon>
        <taxon>Pseudomonadati</taxon>
        <taxon>Pseudomonadota</taxon>
        <taxon>Gammaproteobacteria</taxon>
        <taxon>Lysobacterales</taxon>
        <taxon>Lysobacteraceae</taxon>
        <taxon>Xanthomonas</taxon>
    </lineage>
</organism>
<proteinExistence type="inferred from homology"/>
<sequence length="161" mass="18258">MPSFDVVSEVDKHELTNAVDQANRELDTRFDFKGVEARFELEDGKVINQSAPSDFQIKQMTDILRARLLARGIDIRCLEFGDVETNLAGARQKVTVKQGIEQKQAKQLVAKLKEAKLKVEAQINGDKLRVTGKKRDDLQDAIALLKKADFELPLQFDNFRD</sequence>